<reference key="1">
    <citation type="journal article" date="1992" name="J. Virol.">
        <title>Molecular cloning and expression of a murine homolog of the human poliovirus receptor gene.</title>
        <authorList>
            <person name="Morrison M.E."/>
            <person name="Racaniello V.R."/>
        </authorList>
    </citation>
    <scope>NUCLEOTIDE SEQUENCE [MRNA] (ISOFORM ALPHA)</scope>
</reference>
<reference key="2">
    <citation type="journal article" date="1994" name="J. Biol. Chem.">
        <title>Amino acid residues on human poliovirus receptor involved in interaction with poliovirus.</title>
        <authorList>
            <person name="Aoki J."/>
            <person name="Koike S."/>
            <person name="Ise I."/>
            <person name="Sato-Yoshida Y."/>
            <person name="Nomoto A."/>
        </authorList>
    </citation>
    <scope>NUCLEOTIDE SEQUENCE [MRNA] (ISOFORM BETA)</scope>
    <source>
        <strain>C57BL/6J</strain>
        <tissue>Brain</tissue>
    </source>
</reference>
<reference key="3">
    <citation type="journal article" date="2004" name="Genome Res.">
        <title>The status, quality, and expansion of the NIH full-length cDNA project: the Mammalian Gene Collection (MGC).</title>
        <authorList>
            <consortium name="The MGC Project Team"/>
        </authorList>
    </citation>
    <scope>NUCLEOTIDE SEQUENCE [LARGE SCALE MRNA] (ISOFORM BETA)</scope>
    <source>
        <strain>FVB/N</strain>
        <tissue>Colon</tissue>
    </source>
</reference>
<reference key="4">
    <citation type="journal article" date="1999" name="J. Virol.">
        <title>The murine homolog (Mph) of human herpesvirus entry protein B (HveB) mediates entry of pseudorabies virus but not herpes simplex virus types 1 and 2.</title>
        <authorList>
            <person name="Shukla D."/>
            <person name="Rowe C.L."/>
            <person name="Dong Y."/>
            <person name="Racaniello V.R."/>
            <person name="Spear P.G."/>
        </authorList>
    </citation>
    <scope>CHARACTERIZATION</scope>
</reference>
<reference key="5">
    <citation type="journal article" date="2000" name="J. Biol. Chem.">
        <title>Nectin-3: a new member of immunoglobulin-like cell adhesion molecules that shows homophilic and heterophilic cell-cell adhesion activities.</title>
        <authorList>
            <person name="Satoh-Horikawa K."/>
            <person name="Nakanishi H."/>
            <person name="Takahashi K."/>
            <person name="Miyahara M."/>
            <person name="Nishimura M."/>
            <person name="Tachibana K."/>
            <person name="Mizoguchi A."/>
            <person name="Takai Y."/>
        </authorList>
    </citation>
    <scope>INTERACTION WITH NECTIN3</scope>
</reference>
<reference key="6">
    <citation type="journal article" date="2009" name="Nat. Biotechnol.">
        <title>Mass-spectrometric identification and relative quantification of N-linked cell surface glycoproteins.</title>
        <authorList>
            <person name="Wollscheid B."/>
            <person name="Bausch-Fluck D."/>
            <person name="Henderson C."/>
            <person name="O'Brien R."/>
            <person name="Bibel M."/>
            <person name="Schiess R."/>
            <person name="Aebersold R."/>
            <person name="Watts J.D."/>
        </authorList>
    </citation>
    <scope>GLYCOSYLATION [LARGE SCALE ANALYSIS] AT ASN-128; ASN-138 AND ASN-315</scope>
</reference>
<reference key="7">
    <citation type="journal article" date="2010" name="Cell">
        <title>A tissue-specific atlas of mouse protein phosphorylation and expression.</title>
        <authorList>
            <person name="Huttlin E.L."/>
            <person name="Jedrychowski M.P."/>
            <person name="Elias J.E."/>
            <person name="Goswami T."/>
            <person name="Rad R."/>
            <person name="Beausoleil S.A."/>
            <person name="Villen J."/>
            <person name="Haas W."/>
            <person name="Sowa M.E."/>
            <person name="Gygi S.P."/>
        </authorList>
    </citation>
    <scope>PHOSPHORYLATION [LARGE SCALE ANALYSIS] AT THR-401 AND SER-424</scope>
    <scope>IDENTIFICATION BY MASS SPECTROMETRY [LARGE SCALE ANALYSIS]</scope>
    <source>
        <tissue>Brown adipose tissue</tissue>
        <tissue>Heart</tissue>
        <tissue>Kidney</tissue>
        <tissue>Liver</tissue>
        <tissue>Lung</tissue>
        <tissue>Testis</tissue>
    </source>
</reference>
<reference key="8">
    <citation type="journal article" date="2012" name="Nat. Struct. Mol. Biol.">
        <title>Nectin ectodomain structures reveal a canonical adhesive interface.</title>
        <authorList>
            <person name="Harrison O.J."/>
            <person name="Vendome J."/>
            <person name="Brasch J."/>
            <person name="Jin X."/>
            <person name="Hong S."/>
            <person name="Katsamba P.S."/>
            <person name="Ahlsen G."/>
            <person name="Troyanovsky R.B."/>
            <person name="Troyanovsky S.M."/>
            <person name="Honig B."/>
            <person name="Shapiro L."/>
        </authorList>
    </citation>
    <scope>X-RAY CRYSTALLOGRAPHY (2.56 ANGSTROMS) OF 32-250</scope>
    <scope>SUBUNIT</scope>
    <scope>DISULFIDE BONDS</scope>
    <scope>GLYCOSYLATION AT ASN-128 AND ASN-138</scope>
    <scope>IDENTIFICATION BY MASS SPECTROMETRY</scope>
</reference>
<proteinExistence type="evidence at protein level"/>
<name>NECT2_MOUSE</name>
<feature type="signal peptide" evidence="2">
    <location>
        <begin position="1"/>
        <end position="31"/>
    </location>
</feature>
<feature type="chain" id="PRO_0000015137" description="Nectin-2">
    <location>
        <begin position="32"/>
        <end position="530"/>
    </location>
</feature>
<feature type="topological domain" description="Extracellular" evidence="2">
    <location>
        <begin position="32"/>
        <end position="351"/>
    </location>
</feature>
<feature type="transmembrane region" description="Helical" evidence="2">
    <location>
        <begin position="352"/>
        <end position="372"/>
    </location>
</feature>
<feature type="topological domain" description="Cytoplasmic" evidence="2">
    <location>
        <begin position="373"/>
        <end position="530"/>
    </location>
</feature>
<feature type="domain" description="Ig-like V-type">
    <location>
        <begin position="32"/>
        <end position="147"/>
    </location>
</feature>
<feature type="domain" description="Ig-like C2-type 1">
    <location>
        <begin position="153"/>
        <end position="247"/>
    </location>
</feature>
<feature type="domain" description="Ig-like C2-type 2">
    <location>
        <begin position="252"/>
        <end position="337"/>
    </location>
</feature>
<feature type="region of interest" description="Disordered" evidence="4">
    <location>
        <begin position="382"/>
        <end position="407"/>
    </location>
</feature>
<feature type="modified residue" description="Phosphothreonine" evidence="10">
    <location>
        <position position="401"/>
    </location>
</feature>
<feature type="modified residue" description="Phosphoserine" evidence="10">
    <location>
        <position position="424"/>
    </location>
</feature>
<feature type="glycosylation site" description="N-linked (GlcNAc...) asparagine" evidence="6 7">
    <location>
        <position position="128"/>
    </location>
</feature>
<feature type="glycosylation site" description="N-linked (GlcNAc...) asparagine" evidence="6 7">
    <location>
        <position position="138"/>
    </location>
</feature>
<feature type="glycosylation site" description="N-linked (GlcNAc...) asparagine" evidence="6">
    <location>
        <position position="315"/>
    </location>
</feature>
<feature type="disulfide bond" evidence="3 7">
    <location>
        <begin position="54"/>
        <end position="131"/>
    </location>
</feature>
<feature type="disulfide bond" evidence="3 7">
    <location>
        <begin position="174"/>
        <end position="229"/>
    </location>
</feature>
<feature type="disulfide bond" evidence="3">
    <location>
        <begin position="274"/>
        <end position="320"/>
    </location>
</feature>
<feature type="splice variant" id="VSP_002630" description="In isoform Alpha." evidence="8">
    <original>ESPSTAGAGATGGIIGGIIAAIIATAVAGTGILICRQQRKEQRLQAADEEEELEGPPSYKPPTPKAKLEEPEMPSQLFTLGASEHSPVKTPYFDAGVSCADQEMPRYHELPTLEERSGPLLLGATGLGP</original>
    <variation>DTPQASRDVGPLVWGAVGGTLLVLLLAGGFLALILLRGRRRRKSPGGGGNDGDRGSYDPKTQVFGNGGPVFWRSASPEPMRPDGREEDEEEEEEMKAEEGLMLPPHESPKDDMESHLDGSLISRRAVYV</variation>
    <location>
        <begin position="339"/>
        <end position="467"/>
    </location>
</feature>
<feature type="splice variant" id="VSP_002631" description="In isoform Alpha." evidence="8">
    <location>
        <begin position="468"/>
        <end position="530"/>
    </location>
</feature>
<feature type="strand" evidence="11">
    <location>
        <begin position="35"/>
        <end position="37"/>
    </location>
</feature>
<feature type="strand" evidence="11">
    <location>
        <begin position="40"/>
        <end position="45"/>
    </location>
</feature>
<feature type="strand" evidence="11">
    <location>
        <begin position="50"/>
        <end position="52"/>
    </location>
</feature>
<feature type="strand" evidence="12">
    <location>
        <begin position="54"/>
        <end position="56"/>
    </location>
</feature>
<feature type="strand" evidence="11">
    <location>
        <begin position="63"/>
        <end position="70"/>
    </location>
</feature>
<feature type="strand" evidence="11">
    <location>
        <begin position="76"/>
        <end position="81"/>
    </location>
</feature>
<feature type="turn" evidence="11">
    <location>
        <begin position="82"/>
        <end position="84"/>
    </location>
</feature>
<feature type="strand" evidence="11">
    <location>
        <begin position="85"/>
        <end position="87"/>
    </location>
</feature>
<feature type="turn" evidence="11">
    <location>
        <begin position="95"/>
        <end position="97"/>
    </location>
</feature>
<feature type="strand" evidence="11">
    <location>
        <begin position="98"/>
        <end position="100"/>
    </location>
</feature>
<feature type="strand" evidence="12">
    <location>
        <begin position="104"/>
        <end position="106"/>
    </location>
</feature>
<feature type="helix" evidence="13">
    <location>
        <begin position="108"/>
        <end position="111"/>
    </location>
</feature>
<feature type="strand" evidence="11">
    <location>
        <begin position="116"/>
        <end position="118"/>
    </location>
</feature>
<feature type="helix" evidence="11">
    <location>
        <begin position="123"/>
        <end position="125"/>
    </location>
</feature>
<feature type="strand" evidence="11">
    <location>
        <begin position="127"/>
        <end position="136"/>
    </location>
</feature>
<feature type="strand" evidence="11">
    <location>
        <begin position="139"/>
        <end position="151"/>
    </location>
</feature>
<feature type="strand" evidence="11">
    <location>
        <begin position="154"/>
        <end position="159"/>
    </location>
</feature>
<feature type="strand" evidence="11">
    <location>
        <begin position="165"/>
        <end position="167"/>
    </location>
</feature>
<feature type="strand" evidence="11">
    <location>
        <begin position="169"/>
        <end position="181"/>
    </location>
</feature>
<feature type="strand" evidence="11">
    <location>
        <begin position="184"/>
        <end position="188"/>
    </location>
</feature>
<feature type="strand" evidence="11">
    <location>
        <begin position="194"/>
        <end position="201"/>
    </location>
</feature>
<feature type="strand" evidence="11">
    <location>
        <begin position="208"/>
        <end position="216"/>
    </location>
</feature>
<feature type="helix" evidence="11">
    <location>
        <begin position="220"/>
        <end position="222"/>
    </location>
</feature>
<feature type="strand" evidence="11">
    <location>
        <begin position="226"/>
        <end position="232"/>
    </location>
</feature>
<feature type="strand" evidence="13">
    <location>
        <begin position="236"/>
        <end position="238"/>
    </location>
</feature>
<feature type="strand" evidence="11">
    <location>
        <begin position="240"/>
        <end position="245"/>
    </location>
</feature>
<organism>
    <name type="scientific">Mus musculus</name>
    <name type="common">Mouse</name>
    <dbReference type="NCBI Taxonomy" id="10090"/>
    <lineage>
        <taxon>Eukaryota</taxon>
        <taxon>Metazoa</taxon>
        <taxon>Chordata</taxon>
        <taxon>Craniata</taxon>
        <taxon>Vertebrata</taxon>
        <taxon>Euteleostomi</taxon>
        <taxon>Mammalia</taxon>
        <taxon>Eutheria</taxon>
        <taxon>Euarchontoglires</taxon>
        <taxon>Glires</taxon>
        <taxon>Rodentia</taxon>
        <taxon>Myomorpha</taxon>
        <taxon>Muroidea</taxon>
        <taxon>Muridae</taxon>
        <taxon>Murinae</taxon>
        <taxon>Mus</taxon>
        <taxon>Mus</taxon>
    </lineage>
</organism>
<sequence length="530" mass="57318">MARAAVLPPSRLSPTLPLLPLLLLLLQETGAQDVRVRVLPEVRGRLGGTVELPCHLLPPTTERVSQVTWQRLDGTVVAAFHPSFGVDFPNSQFSKDRLSFVRARPETNADLRDATLAFRGLRVEDEGNYTCEFATFPNGTRRGVTWLRVIAQPENHAEAQEVTIGPQSVAVARCVSTGGRPPARITWISSLGGEAKDTQEPGIQAGTVTIISRYSLVPVGRADGVKVTCRVEHESFEEPILLPVTLSVRYPPEVSISGYDDNWYLGRSEAILTCDVRSNPEPTDYDWSTTSGVFPASAVAQGSQLLVHSVDRMVNTTFICTATNAVGTGRAEQVILVRESPSTAGAGATGGIIGGIIAAIIATAVAGTGILICRQQRKEQRLQAADEEEELEGPPSYKPPTPKAKLEEPEMPSQLFTLGASEHSPVKTPYFDAGVSCADQEMPRYHELPTLEERSGPLLLGATGLGPSLLVPPGPNVVEGVSLSLEDEEEDDEEEDFLDKINPIYDALSYPSPSDSYQSKDFFVSRAMYV</sequence>
<evidence type="ECO:0000250" key="1">
    <source>
        <dbReference type="UniProtKB" id="Q92692"/>
    </source>
</evidence>
<evidence type="ECO:0000255" key="2"/>
<evidence type="ECO:0000255" key="3">
    <source>
        <dbReference type="PROSITE-ProRule" id="PRU00114"/>
    </source>
</evidence>
<evidence type="ECO:0000256" key="4">
    <source>
        <dbReference type="SAM" id="MobiDB-lite"/>
    </source>
</evidence>
<evidence type="ECO:0000269" key="5">
    <source>
    </source>
</evidence>
<evidence type="ECO:0000269" key="6">
    <source>
    </source>
</evidence>
<evidence type="ECO:0000269" key="7">
    <source>
    </source>
</evidence>
<evidence type="ECO:0000303" key="8">
    <source>
    </source>
</evidence>
<evidence type="ECO:0000305" key="9"/>
<evidence type="ECO:0007744" key="10">
    <source>
    </source>
</evidence>
<evidence type="ECO:0007829" key="11">
    <source>
        <dbReference type="PDB" id="4FMK"/>
    </source>
</evidence>
<evidence type="ECO:0007829" key="12">
    <source>
        <dbReference type="PDB" id="4FN0"/>
    </source>
</evidence>
<evidence type="ECO:0007829" key="13">
    <source>
        <dbReference type="PDB" id="4FS0"/>
    </source>
</evidence>
<gene>
    <name evidence="1" type="primary">Nectin2</name>
    <name type="synonym">Mph</name>
    <name type="synonym">Pvr</name>
    <name type="synonym">Pvrl2</name>
    <name type="synonym">Pvs</name>
</gene>
<dbReference type="EMBL" id="M80206">
    <property type="protein sequence ID" value="AAA39734.1"/>
    <property type="molecule type" value="mRNA"/>
</dbReference>
<dbReference type="EMBL" id="D26107">
    <property type="protein sequence ID" value="BAA05103.1"/>
    <property type="molecule type" value="mRNA"/>
</dbReference>
<dbReference type="EMBL" id="BC059941">
    <property type="protein sequence ID" value="AAH59941.1"/>
    <property type="molecule type" value="mRNA"/>
</dbReference>
<dbReference type="CCDS" id="CCDS20913.1">
    <molecule id="P32507-1"/>
</dbReference>
<dbReference type="CCDS" id="CCDS52063.1">
    <molecule id="P32507-2"/>
</dbReference>
<dbReference type="PIR" id="A38211">
    <property type="entry name" value="HLMSP3"/>
</dbReference>
<dbReference type="PIR" id="A53437">
    <property type="entry name" value="A53437"/>
</dbReference>
<dbReference type="RefSeq" id="NP_001153196.1">
    <molecule id="P32507-2"/>
    <property type="nucleotide sequence ID" value="NM_001159724.1"/>
</dbReference>
<dbReference type="RefSeq" id="NP_033016.3">
    <molecule id="P32507-1"/>
    <property type="nucleotide sequence ID" value="NM_008990.3"/>
</dbReference>
<dbReference type="PDB" id="4FMK">
    <property type="method" value="X-ray"/>
    <property type="resolution" value="2.56 A"/>
    <property type="chains" value="A=32-250"/>
</dbReference>
<dbReference type="PDB" id="4FN0">
    <property type="method" value="X-ray"/>
    <property type="resolution" value="3.35 A"/>
    <property type="chains" value="A/B/C=32-250"/>
</dbReference>
<dbReference type="PDB" id="4FS0">
    <property type="method" value="X-ray"/>
    <property type="resolution" value="3.25 A"/>
    <property type="chains" value="A=32-250"/>
</dbReference>
<dbReference type="PDBsum" id="4FMK"/>
<dbReference type="PDBsum" id="4FN0"/>
<dbReference type="PDBsum" id="4FS0"/>
<dbReference type="SMR" id="P32507"/>
<dbReference type="BioGRID" id="202518">
    <property type="interactions" value="2"/>
</dbReference>
<dbReference type="DIP" id="DIP-59964N"/>
<dbReference type="FunCoup" id="P32507">
    <property type="interactions" value="293"/>
</dbReference>
<dbReference type="IntAct" id="P32507">
    <property type="interactions" value="3"/>
</dbReference>
<dbReference type="STRING" id="10090.ENSMUSP00000074898"/>
<dbReference type="GlyCosmos" id="P32507">
    <property type="glycosylation" value="3 sites, No reported glycans"/>
</dbReference>
<dbReference type="GlyGen" id="P32507">
    <property type="glycosylation" value="3 sites, 1 N-linked glycan (1 site)"/>
</dbReference>
<dbReference type="iPTMnet" id="P32507"/>
<dbReference type="PhosphoSitePlus" id="P32507"/>
<dbReference type="SwissPalm" id="P32507"/>
<dbReference type="jPOST" id="P32507"/>
<dbReference type="PaxDb" id="10090-ENSMUSP00000074898"/>
<dbReference type="PeptideAtlas" id="P32507"/>
<dbReference type="ProteomicsDB" id="286172">
    <molecule id="P32507-1"/>
</dbReference>
<dbReference type="ProteomicsDB" id="286173">
    <molecule id="P32507-2"/>
</dbReference>
<dbReference type="Pumba" id="P32507"/>
<dbReference type="ABCD" id="P32507">
    <property type="antibodies" value="11 sequenced antibodies"/>
</dbReference>
<dbReference type="Antibodypedia" id="2425">
    <property type="antibodies" value="616 antibodies from 41 providers"/>
</dbReference>
<dbReference type="DNASU" id="19294"/>
<dbReference type="Ensembl" id="ENSMUST00000075447.14">
    <molecule id="P32507-1"/>
    <property type="protein sequence ID" value="ENSMUSP00000074898.8"/>
    <property type="gene ID" value="ENSMUSG00000062300.15"/>
</dbReference>
<dbReference type="Ensembl" id="ENSMUST00000108450.5">
    <molecule id="P32507-2"/>
    <property type="protein sequence ID" value="ENSMUSP00000104089.4"/>
    <property type="gene ID" value="ENSMUSG00000062300.15"/>
</dbReference>
<dbReference type="GeneID" id="19294"/>
<dbReference type="KEGG" id="mmu:19294"/>
<dbReference type="UCSC" id="uc009fnd.2">
    <molecule id="P32507-1"/>
    <property type="organism name" value="mouse"/>
</dbReference>
<dbReference type="UCSC" id="uc009fne.3">
    <molecule id="P32507-2"/>
    <property type="organism name" value="mouse"/>
</dbReference>
<dbReference type="AGR" id="MGI:97822"/>
<dbReference type="CTD" id="5819"/>
<dbReference type="MGI" id="MGI:97822">
    <property type="gene designation" value="Nectin2"/>
</dbReference>
<dbReference type="VEuPathDB" id="HostDB:ENSMUSG00000062300"/>
<dbReference type="eggNOG" id="ENOG502QWSY">
    <property type="taxonomic scope" value="Eukaryota"/>
</dbReference>
<dbReference type="GeneTree" id="ENSGT00940000161167"/>
<dbReference type="HOGENOM" id="CLU_029618_0_1_1"/>
<dbReference type="InParanoid" id="P32507"/>
<dbReference type="OMA" id="REVTWLR"/>
<dbReference type="OrthoDB" id="6413693at2759"/>
<dbReference type="PhylomeDB" id="P32507"/>
<dbReference type="TreeFam" id="TF331051"/>
<dbReference type="Reactome" id="R-MMU-198933">
    <property type="pathway name" value="Immunoregulatory interactions between a Lymphoid and a non-Lymphoid cell"/>
</dbReference>
<dbReference type="Reactome" id="R-MMU-418990">
    <property type="pathway name" value="Adherens junctions interactions"/>
</dbReference>
<dbReference type="Reactome" id="R-MMU-420597">
    <property type="pathway name" value="Nectin/Necl trans heterodimerization"/>
</dbReference>
<dbReference type="BioGRID-ORCS" id="19294">
    <property type="hits" value="0 hits in 78 CRISPR screens"/>
</dbReference>
<dbReference type="ChiTaRS" id="Nectin2">
    <property type="organism name" value="mouse"/>
</dbReference>
<dbReference type="EvolutionaryTrace" id="P32507"/>
<dbReference type="PRO" id="PR:P32507"/>
<dbReference type="Proteomes" id="UP000000589">
    <property type="component" value="Chromosome 7"/>
</dbReference>
<dbReference type="RNAct" id="P32507">
    <property type="molecule type" value="protein"/>
</dbReference>
<dbReference type="Bgee" id="ENSMUSG00000062300">
    <property type="expression patterns" value="Expressed in placenta labyrinth and 215 other cell types or tissues"/>
</dbReference>
<dbReference type="GO" id="GO:0043296">
    <property type="term" value="C:apical junction complex"/>
    <property type="evidence" value="ECO:0000314"/>
    <property type="project" value="MGI"/>
</dbReference>
<dbReference type="GO" id="GO:0009986">
    <property type="term" value="C:cell surface"/>
    <property type="evidence" value="ECO:0007669"/>
    <property type="project" value="Ensembl"/>
</dbReference>
<dbReference type="GO" id="GO:0044291">
    <property type="term" value="C:cell-cell contact zone"/>
    <property type="evidence" value="ECO:0000314"/>
    <property type="project" value="MGI"/>
</dbReference>
<dbReference type="GO" id="GO:0005911">
    <property type="term" value="C:cell-cell junction"/>
    <property type="evidence" value="ECO:0000314"/>
    <property type="project" value="MGI"/>
</dbReference>
<dbReference type="GO" id="GO:0005886">
    <property type="term" value="C:plasma membrane"/>
    <property type="evidence" value="ECO:0000314"/>
    <property type="project" value="HGNC-UCL"/>
</dbReference>
<dbReference type="GO" id="GO:0005915">
    <property type="term" value="C:zonula adherens"/>
    <property type="evidence" value="ECO:0000314"/>
    <property type="project" value="BHF-UCL"/>
</dbReference>
<dbReference type="GO" id="GO:0050839">
    <property type="term" value="F:cell adhesion molecule binding"/>
    <property type="evidence" value="ECO:0000353"/>
    <property type="project" value="BHF-UCL"/>
</dbReference>
<dbReference type="GO" id="GO:0042802">
    <property type="term" value="F:identical protein binding"/>
    <property type="evidence" value="ECO:0000353"/>
    <property type="project" value="IntAct"/>
</dbReference>
<dbReference type="GO" id="GO:0042803">
    <property type="term" value="F:protein homodimerization activity"/>
    <property type="evidence" value="ECO:0000353"/>
    <property type="project" value="HGNC-UCL"/>
</dbReference>
<dbReference type="GO" id="GO:0048018">
    <property type="term" value="F:receptor ligand activity"/>
    <property type="evidence" value="ECO:0007669"/>
    <property type="project" value="Ensembl"/>
</dbReference>
<dbReference type="GO" id="GO:0001675">
    <property type="term" value="P:acrosome assembly"/>
    <property type="evidence" value="ECO:0000315"/>
    <property type="project" value="MGI"/>
</dbReference>
<dbReference type="GO" id="GO:0032989">
    <property type="term" value="P:cellular anatomical entity morphogenesis"/>
    <property type="evidence" value="ECO:0000315"/>
    <property type="project" value="MGI"/>
</dbReference>
<dbReference type="GO" id="GO:0044782">
    <property type="term" value="P:cilium organization"/>
    <property type="evidence" value="ECO:0000315"/>
    <property type="project" value="MGI"/>
</dbReference>
<dbReference type="GO" id="GO:0046814">
    <property type="term" value="P:coreceptor-mediated virion attachment to host cell"/>
    <property type="evidence" value="ECO:0007669"/>
    <property type="project" value="Ensembl"/>
</dbReference>
<dbReference type="GO" id="GO:0007010">
    <property type="term" value="P:cytoskeleton organization"/>
    <property type="evidence" value="ECO:0000315"/>
    <property type="project" value="MGI"/>
</dbReference>
<dbReference type="GO" id="GO:0051649">
    <property type="term" value="P:establishment of localization in cell"/>
    <property type="evidence" value="ECO:0000315"/>
    <property type="project" value="MGI"/>
</dbReference>
<dbReference type="GO" id="GO:0051654">
    <property type="term" value="P:establishment of mitochondrion localization"/>
    <property type="evidence" value="ECO:0000315"/>
    <property type="project" value="MGI"/>
</dbReference>
<dbReference type="GO" id="GO:0009566">
    <property type="term" value="P:fertilization"/>
    <property type="evidence" value="ECO:0000315"/>
    <property type="project" value="MGI"/>
</dbReference>
<dbReference type="GO" id="GO:0019064">
    <property type="term" value="P:fusion of virus membrane with host plasma membrane"/>
    <property type="evidence" value="ECO:0007669"/>
    <property type="project" value="Ensembl"/>
</dbReference>
<dbReference type="GO" id="GO:0007156">
    <property type="term" value="P:homophilic cell adhesion via plasma membrane adhesion molecules"/>
    <property type="evidence" value="ECO:0000314"/>
    <property type="project" value="HGNC-UCL"/>
</dbReference>
<dbReference type="GO" id="GO:0042267">
    <property type="term" value="P:natural killer cell mediated cytotoxicity"/>
    <property type="evidence" value="ECO:0007669"/>
    <property type="project" value="Ensembl"/>
</dbReference>
<dbReference type="GO" id="GO:0045953">
    <property type="term" value="P:negative regulation of natural killer cell mediated cytotoxicity"/>
    <property type="evidence" value="ECO:0007669"/>
    <property type="project" value="Ensembl"/>
</dbReference>
<dbReference type="GO" id="GO:0002891">
    <property type="term" value="P:positive regulation of immunoglobulin mediated immune response"/>
    <property type="evidence" value="ECO:0007669"/>
    <property type="project" value="Ensembl"/>
</dbReference>
<dbReference type="GO" id="GO:0033005">
    <property type="term" value="P:positive regulation of mast cell activation"/>
    <property type="evidence" value="ECO:0007669"/>
    <property type="project" value="Ensembl"/>
</dbReference>
<dbReference type="GO" id="GO:0002860">
    <property type="term" value="P:positive regulation of natural killer cell mediated cytotoxicity directed against tumor cell target"/>
    <property type="evidence" value="ECO:0007669"/>
    <property type="project" value="Ensembl"/>
</dbReference>
<dbReference type="GO" id="GO:0050862">
    <property type="term" value="P:positive regulation of T cell receptor signaling pathway"/>
    <property type="evidence" value="ECO:0007669"/>
    <property type="project" value="Ensembl"/>
</dbReference>
<dbReference type="GO" id="GO:0046596">
    <property type="term" value="P:regulation of viral entry into host cell"/>
    <property type="evidence" value="ECO:0007669"/>
    <property type="project" value="Ensembl"/>
</dbReference>
<dbReference type="GO" id="GO:0030382">
    <property type="term" value="P:sperm mitochondrion organization"/>
    <property type="evidence" value="ECO:0000315"/>
    <property type="project" value="MGI"/>
</dbReference>
<dbReference type="GO" id="GO:0007286">
    <property type="term" value="P:spermatid development"/>
    <property type="evidence" value="ECO:0000315"/>
    <property type="project" value="BHF-UCL"/>
</dbReference>
<dbReference type="GO" id="GO:0007289">
    <property type="term" value="P:spermatid nucleus differentiation"/>
    <property type="evidence" value="ECO:0000315"/>
    <property type="project" value="MGI"/>
</dbReference>
<dbReference type="GO" id="GO:0042271">
    <property type="term" value="P:susceptibility to natural killer cell mediated cytotoxicity"/>
    <property type="evidence" value="ECO:0007669"/>
    <property type="project" value="Ensembl"/>
</dbReference>
<dbReference type="GO" id="GO:0060370">
    <property type="term" value="P:susceptibility to T cell mediated cytotoxicity"/>
    <property type="evidence" value="ECO:0007669"/>
    <property type="project" value="Ensembl"/>
</dbReference>
<dbReference type="CDD" id="cd20930">
    <property type="entry name" value="Ig3_Nectin-5_like"/>
    <property type="match status" value="1"/>
</dbReference>
<dbReference type="CDD" id="cd07703">
    <property type="entry name" value="IgC1_2_Nectin-2_Necl-5_like"/>
    <property type="match status" value="1"/>
</dbReference>
<dbReference type="CDD" id="cd20989">
    <property type="entry name" value="IgV_1_Nectin-2_NecL-5_like_CD112_CD155"/>
    <property type="match status" value="1"/>
</dbReference>
<dbReference type="FunFam" id="2.60.40.10:FF:000619">
    <property type="entry name" value="Nectin cell adhesion molecule 2"/>
    <property type="match status" value="1"/>
</dbReference>
<dbReference type="FunFam" id="2.60.40.10:FF:000711">
    <property type="entry name" value="Nectin cell adhesion molecule 2"/>
    <property type="match status" value="1"/>
</dbReference>
<dbReference type="FunFam" id="2.60.40.10:FF:000712">
    <property type="entry name" value="Poliovirus receptor homolog"/>
    <property type="match status" value="1"/>
</dbReference>
<dbReference type="Gene3D" id="2.60.40.10">
    <property type="entry name" value="Immunoglobulins"/>
    <property type="match status" value="3"/>
</dbReference>
<dbReference type="InterPro" id="IPR013162">
    <property type="entry name" value="CD80_C2-set"/>
</dbReference>
<dbReference type="InterPro" id="IPR007110">
    <property type="entry name" value="Ig-like_dom"/>
</dbReference>
<dbReference type="InterPro" id="IPR036179">
    <property type="entry name" value="Ig-like_dom_sf"/>
</dbReference>
<dbReference type="InterPro" id="IPR013783">
    <property type="entry name" value="Ig-like_fold"/>
</dbReference>
<dbReference type="InterPro" id="IPR003599">
    <property type="entry name" value="Ig_sub"/>
</dbReference>
<dbReference type="InterPro" id="IPR013106">
    <property type="entry name" value="Ig_V-set"/>
</dbReference>
<dbReference type="InterPro" id="IPR052659">
    <property type="entry name" value="Nectin/PVR"/>
</dbReference>
<dbReference type="PANTHER" id="PTHR47387">
    <property type="entry name" value="NECTIN-2"/>
    <property type="match status" value="1"/>
</dbReference>
<dbReference type="PANTHER" id="PTHR47387:SF1">
    <property type="entry name" value="NECTIN-2"/>
    <property type="match status" value="1"/>
</dbReference>
<dbReference type="Pfam" id="PF08205">
    <property type="entry name" value="C2-set_2"/>
    <property type="match status" value="1"/>
</dbReference>
<dbReference type="Pfam" id="PF07686">
    <property type="entry name" value="V-set"/>
    <property type="match status" value="1"/>
</dbReference>
<dbReference type="SMART" id="SM00409">
    <property type="entry name" value="IG"/>
    <property type="match status" value="3"/>
</dbReference>
<dbReference type="SMART" id="SM00406">
    <property type="entry name" value="IGv"/>
    <property type="match status" value="1"/>
</dbReference>
<dbReference type="SUPFAM" id="SSF48726">
    <property type="entry name" value="Immunoglobulin"/>
    <property type="match status" value="3"/>
</dbReference>
<dbReference type="PROSITE" id="PS50835">
    <property type="entry name" value="IG_LIKE"/>
    <property type="match status" value="3"/>
</dbReference>
<comment type="function">
    <text evidence="1">Modulator of T-cell signaling. Can be either a costimulator of T-cell function, or a coinhibitor, depending on the receptor it binds to. Upon binding to CD226, stimulates T-cell proliferation and cytokine production, including that of IL2, IL5, IL10, IL13, and IFNG. Upon interaction with PVRIG, inhibits T-cell proliferation. These interactions are competitive. Probable cell adhesion protein.</text>
</comment>
<comment type="subunit">
    <text evidence="1 5 7">Can form trans-heterodimers with NECTIN3 (PubMed:10744716, PubMed:22902367). Interacts with CD226 or with PVRIG; these interactions are competitive and have a differential functional outcome on T-cell activation, either positive or negative, respectively. Binds with low affinity to TIGIT (By similarity).</text>
</comment>
<comment type="interaction">
    <interactant intactId="EBI-8844104">
        <id>P32507-2</id>
    </interactant>
    <interactant intactId="EBI-8844104">
        <id>P32507-2</id>
        <label>Nectin2</label>
    </interactant>
    <organismsDiffer>false</organismsDiffer>
    <experiments>3</experiments>
</comment>
<comment type="subcellular location">
    <subcellularLocation>
        <location evidence="1">Cell membrane</location>
        <topology evidence="9">Single-pass type I membrane protein</topology>
    </subcellularLocation>
</comment>
<comment type="alternative products">
    <event type="alternative splicing"/>
    <isoform>
        <id>P32507-1</id>
        <name>Beta</name>
        <sequence type="displayed"/>
    </isoform>
    <isoform>
        <id>P32507-2</id>
        <name>Alpha</name>
        <sequence type="described" ref="VSP_002630 VSP_002631"/>
    </isoform>
</comment>
<comment type="tissue specificity">
    <text>Brain, spinal cord, spleen, kidney, heart and liver.</text>
</comment>
<comment type="similarity">
    <text evidence="9">Belongs to the nectin family.</text>
</comment>
<accession>P32507</accession>
<accession>Q62096</accession>
<protein>
    <recommendedName>
        <fullName>Nectin-2</fullName>
    </recommendedName>
    <alternativeName>
        <fullName>Herpes virus entry mediator B</fullName>
        <shortName>Herpesvirus entry mediator B</shortName>
        <shortName>HveB</shortName>
    </alternativeName>
    <alternativeName>
        <fullName>Murine herpes virus entry protein B</fullName>
        <shortName>mHveB</shortName>
    </alternativeName>
    <alternativeName>
        <fullName evidence="1">Nectin cell adhesion molecule 2</fullName>
    </alternativeName>
    <alternativeName>
        <fullName>Poliovirus receptor homolog</fullName>
    </alternativeName>
    <alternativeName>
        <fullName>Poliovirus receptor-related protein 2</fullName>
    </alternativeName>
    <cdAntigenName>CD112</cdAntigenName>
</protein>
<keyword id="KW-0002">3D-structure</keyword>
<keyword id="KW-0025">Alternative splicing</keyword>
<keyword id="KW-0130">Cell adhesion</keyword>
<keyword id="KW-1003">Cell membrane</keyword>
<keyword id="KW-1015">Disulfide bond</keyword>
<keyword id="KW-0325">Glycoprotein</keyword>
<keyword id="KW-0393">Immunoglobulin domain</keyword>
<keyword id="KW-0472">Membrane</keyword>
<keyword id="KW-0597">Phosphoprotein</keyword>
<keyword id="KW-0675">Receptor</keyword>
<keyword id="KW-1185">Reference proteome</keyword>
<keyword id="KW-0677">Repeat</keyword>
<keyword id="KW-0732">Signal</keyword>
<keyword id="KW-0812">Transmembrane</keyword>
<keyword id="KW-1133">Transmembrane helix</keyword>